<comment type="function">
    <text evidence="1">Promotes RNA polymerase assembly. Latches the N- and C-terminal regions of the beta' subunit thereby facilitating its interaction with the beta and alpha subunits.</text>
</comment>
<comment type="catalytic activity">
    <reaction evidence="1">
        <text>RNA(n) + a ribonucleoside 5'-triphosphate = RNA(n+1) + diphosphate</text>
        <dbReference type="Rhea" id="RHEA:21248"/>
        <dbReference type="Rhea" id="RHEA-COMP:14527"/>
        <dbReference type="Rhea" id="RHEA-COMP:17342"/>
        <dbReference type="ChEBI" id="CHEBI:33019"/>
        <dbReference type="ChEBI" id="CHEBI:61557"/>
        <dbReference type="ChEBI" id="CHEBI:140395"/>
        <dbReference type="EC" id="2.7.7.6"/>
    </reaction>
</comment>
<comment type="subunit">
    <text evidence="1">The RNAP catalytic core consists of 2 alpha, 1 beta, 1 beta' and 1 omega subunit. When a sigma factor is associated with the core the holoenzyme is formed, which can initiate transcription.</text>
</comment>
<comment type="similarity">
    <text evidence="1">Belongs to the RNA polymerase subunit omega family.</text>
</comment>
<evidence type="ECO:0000255" key="1">
    <source>
        <dbReference type="HAMAP-Rule" id="MF_00366"/>
    </source>
</evidence>
<evidence type="ECO:0000256" key="2">
    <source>
        <dbReference type="SAM" id="MobiDB-lite"/>
    </source>
</evidence>
<reference key="1">
    <citation type="journal article" date="2006" name="Proc. Natl. Acad. Sci. U.S.A.">
        <title>The complete genome of Rhodococcus sp. RHA1 provides insights into a catabolic powerhouse.</title>
        <authorList>
            <person name="McLeod M.P."/>
            <person name="Warren R.L."/>
            <person name="Hsiao W.W.L."/>
            <person name="Araki N."/>
            <person name="Myhre M."/>
            <person name="Fernandes C."/>
            <person name="Miyazawa D."/>
            <person name="Wong W."/>
            <person name="Lillquist A.L."/>
            <person name="Wang D."/>
            <person name="Dosanjh M."/>
            <person name="Hara H."/>
            <person name="Petrescu A."/>
            <person name="Morin R.D."/>
            <person name="Yang G."/>
            <person name="Stott J.M."/>
            <person name="Schein J.E."/>
            <person name="Shin H."/>
            <person name="Smailus D."/>
            <person name="Siddiqui A.S."/>
            <person name="Marra M.A."/>
            <person name="Jones S.J.M."/>
            <person name="Holt R."/>
            <person name="Brinkman F.S.L."/>
            <person name="Miyauchi K."/>
            <person name="Fukuda M."/>
            <person name="Davies J.E."/>
            <person name="Mohn W.W."/>
            <person name="Eltis L.D."/>
        </authorList>
    </citation>
    <scope>NUCLEOTIDE SEQUENCE [LARGE SCALE GENOMIC DNA]</scope>
    <source>
        <strain>RHA1</strain>
    </source>
</reference>
<organism>
    <name type="scientific">Rhodococcus jostii (strain RHA1)</name>
    <dbReference type="NCBI Taxonomy" id="101510"/>
    <lineage>
        <taxon>Bacteria</taxon>
        <taxon>Bacillati</taxon>
        <taxon>Actinomycetota</taxon>
        <taxon>Actinomycetes</taxon>
        <taxon>Mycobacteriales</taxon>
        <taxon>Nocardiaceae</taxon>
        <taxon>Rhodococcus</taxon>
    </lineage>
</organism>
<dbReference type="EC" id="2.7.7.6" evidence="1"/>
<dbReference type="EMBL" id="CP000431">
    <property type="protein sequence ID" value="ABG98920.1"/>
    <property type="molecule type" value="Genomic_DNA"/>
</dbReference>
<dbReference type="RefSeq" id="WP_009480427.1">
    <property type="nucleotide sequence ID" value="NC_008268.1"/>
</dbReference>
<dbReference type="SMR" id="Q0S0L6"/>
<dbReference type="KEGG" id="rha:RHA1_ro07156"/>
<dbReference type="eggNOG" id="COG1758">
    <property type="taxonomic scope" value="Bacteria"/>
</dbReference>
<dbReference type="HOGENOM" id="CLU_125406_1_1_11"/>
<dbReference type="OrthoDB" id="8481372at2"/>
<dbReference type="Proteomes" id="UP000008710">
    <property type="component" value="Chromosome"/>
</dbReference>
<dbReference type="GO" id="GO:0000428">
    <property type="term" value="C:DNA-directed RNA polymerase complex"/>
    <property type="evidence" value="ECO:0007669"/>
    <property type="project" value="UniProtKB-KW"/>
</dbReference>
<dbReference type="GO" id="GO:0003677">
    <property type="term" value="F:DNA binding"/>
    <property type="evidence" value="ECO:0007669"/>
    <property type="project" value="UniProtKB-UniRule"/>
</dbReference>
<dbReference type="GO" id="GO:0003899">
    <property type="term" value="F:DNA-directed RNA polymerase activity"/>
    <property type="evidence" value="ECO:0007669"/>
    <property type="project" value="UniProtKB-UniRule"/>
</dbReference>
<dbReference type="GO" id="GO:0006351">
    <property type="term" value="P:DNA-templated transcription"/>
    <property type="evidence" value="ECO:0007669"/>
    <property type="project" value="UniProtKB-UniRule"/>
</dbReference>
<dbReference type="FunFam" id="3.90.940.10:FF:000002">
    <property type="entry name" value="DNA-directed RNA polymerase subunit omega"/>
    <property type="match status" value="1"/>
</dbReference>
<dbReference type="Gene3D" id="3.90.940.10">
    <property type="match status" value="1"/>
</dbReference>
<dbReference type="HAMAP" id="MF_00366">
    <property type="entry name" value="RNApol_bact_RpoZ"/>
    <property type="match status" value="1"/>
</dbReference>
<dbReference type="InterPro" id="IPR003716">
    <property type="entry name" value="DNA-dir_RNA_pol_omega"/>
</dbReference>
<dbReference type="InterPro" id="IPR006110">
    <property type="entry name" value="Pol_omega/Rpo6/RPB6"/>
</dbReference>
<dbReference type="InterPro" id="IPR036161">
    <property type="entry name" value="RPB6/omega-like_sf"/>
</dbReference>
<dbReference type="NCBIfam" id="TIGR00690">
    <property type="entry name" value="rpoZ"/>
    <property type="match status" value="1"/>
</dbReference>
<dbReference type="PANTHER" id="PTHR34476">
    <property type="entry name" value="DNA-DIRECTED RNA POLYMERASE SUBUNIT OMEGA"/>
    <property type="match status" value="1"/>
</dbReference>
<dbReference type="PANTHER" id="PTHR34476:SF1">
    <property type="entry name" value="DNA-DIRECTED RNA POLYMERASE SUBUNIT OMEGA"/>
    <property type="match status" value="1"/>
</dbReference>
<dbReference type="Pfam" id="PF01192">
    <property type="entry name" value="RNA_pol_Rpb6"/>
    <property type="match status" value="1"/>
</dbReference>
<dbReference type="SMART" id="SM01409">
    <property type="entry name" value="RNA_pol_Rpb6"/>
    <property type="match status" value="1"/>
</dbReference>
<dbReference type="SUPFAM" id="SSF63562">
    <property type="entry name" value="RPB6/omega subunit-like"/>
    <property type="match status" value="1"/>
</dbReference>
<accession>Q0S0L6</accession>
<protein>
    <recommendedName>
        <fullName evidence="1">DNA-directed RNA polymerase subunit omega</fullName>
        <shortName evidence="1">RNAP omega subunit</shortName>
        <ecNumber evidence="1">2.7.7.6</ecNumber>
    </recommendedName>
    <alternativeName>
        <fullName evidence="1">RNA polymerase omega subunit</fullName>
    </alternativeName>
    <alternativeName>
        <fullName evidence="1">Transcriptase subunit omega</fullName>
    </alternativeName>
</protein>
<sequence>MSSTPAAASATPSHGALPAYDTPLGITNPPIDELLARTSSKYALVIYAAKRARQINDYYNQLGDGILEYVGPLVEPGLQEKPLSIALREIHSDLLEHTEGE</sequence>
<gene>
    <name evidence="1" type="primary">rpoZ</name>
    <name type="ordered locus">RHA1_ro07156</name>
</gene>
<proteinExistence type="inferred from homology"/>
<feature type="chain" id="PRO_1000005996" description="DNA-directed RNA polymerase subunit omega">
    <location>
        <begin position="1"/>
        <end position="101"/>
    </location>
</feature>
<feature type="region of interest" description="Disordered" evidence="2">
    <location>
        <begin position="1"/>
        <end position="22"/>
    </location>
</feature>
<feature type="compositionally biased region" description="Low complexity" evidence="2">
    <location>
        <begin position="1"/>
        <end position="13"/>
    </location>
</feature>
<keyword id="KW-0240">DNA-directed RNA polymerase</keyword>
<keyword id="KW-0548">Nucleotidyltransferase</keyword>
<keyword id="KW-0804">Transcription</keyword>
<keyword id="KW-0808">Transferase</keyword>
<name>RPOZ_RHOJR</name>